<accession>P57547</accession>
<protein>
    <recommendedName>
        <fullName evidence="1">ATP-dependent Clp protease proteolytic subunit</fullName>
        <ecNumber evidence="1">3.4.21.92</ecNumber>
    </recommendedName>
    <alternativeName>
        <fullName evidence="1">Endopeptidase Clp</fullName>
    </alternativeName>
</protein>
<comment type="function">
    <text evidence="1">Cleaves peptides in various proteins in a process that requires ATP hydrolysis. Has a chymotrypsin-like activity. Plays a major role in the degradation of misfolded proteins.</text>
</comment>
<comment type="catalytic activity">
    <reaction evidence="1">
        <text>Hydrolysis of proteins to small peptides in the presence of ATP and magnesium. alpha-casein is the usual test substrate. In the absence of ATP, only oligopeptides shorter than five residues are hydrolyzed (such as succinyl-Leu-Tyr-|-NHMec, and Leu-Tyr-Leu-|-Tyr-Trp, in which cleavage of the -Tyr-|-Leu- and -Tyr-|-Trp bonds also occurs).</text>
        <dbReference type="EC" id="3.4.21.92"/>
    </reaction>
</comment>
<comment type="subunit">
    <text evidence="1">Fourteen ClpP subunits assemble into 2 heptameric rings which stack back to back to give a disk-like structure with a central cavity, resembling the structure of eukaryotic proteasomes.</text>
</comment>
<comment type="subcellular location">
    <subcellularLocation>
        <location evidence="1">Cytoplasm</location>
    </subcellularLocation>
</comment>
<comment type="similarity">
    <text evidence="1">Belongs to the peptidase S14 family.</text>
</comment>
<proteinExistence type="inferred from homology"/>
<sequence length="208" mass="23444">MLYDQIKNNKTSSYATFIPMVVEQHSRGERSYDIYSRLLKERIIFITGAIEDNMANNIVAQILFLEAENPEKDIFLYINSPGGIITSGMSIYDTMQFVKPEISTICLGQACSMAALLLTSGAKGKRFCLPNSKVMIHQPLGGYQGQASDIAIHAREIMEMKKKLNKLMSFHTGQSIKKINKDTERDCFLSANQSIKYGLIDFILSQRQ</sequence>
<gene>
    <name evidence="1" type="primary">clpP</name>
    <name type="ordered locus">BU475</name>
</gene>
<keyword id="KW-0963">Cytoplasm</keyword>
<keyword id="KW-0378">Hydrolase</keyword>
<keyword id="KW-0645">Protease</keyword>
<keyword id="KW-1185">Reference proteome</keyword>
<keyword id="KW-0720">Serine protease</keyword>
<name>CLPP_BUCAI</name>
<evidence type="ECO:0000255" key="1">
    <source>
        <dbReference type="HAMAP-Rule" id="MF_00444"/>
    </source>
</evidence>
<reference key="1">
    <citation type="journal article" date="2000" name="Nature">
        <title>Genome sequence of the endocellular bacterial symbiont of aphids Buchnera sp. APS.</title>
        <authorList>
            <person name="Shigenobu S."/>
            <person name="Watanabe H."/>
            <person name="Hattori M."/>
            <person name="Sakaki Y."/>
            <person name="Ishikawa H."/>
        </authorList>
    </citation>
    <scope>NUCLEOTIDE SEQUENCE [LARGE SCALE GENOMIC DNA]</scope>
    <source>
        <strain>APS</strain>
    </source>
</reference>
<dbReference type="EC" id="3.4.21.92" evidence="1"/>
<dbReference type="EMBL" id="BA000003">
    <property type="protein sequence ID" value="BAB13172.1"/>
    <property type="molecule type" value="Genomic_DNA"/>
</dbReference>
<dbReference type="RefSeq" id="NP_240286.1">
    <property type="nucleotide sequence ID" value="NC_002528.1"/>
</dbReference>
<dbReference type="RefSeq" id="WP_010896135.1">
    <property type="nucleotide sequence ID" value="NC_002528.1"/>
</dbReference>
<dbReference type="SMR" id="P57547"/>
<dbReference type="STRING" id="563178.BUAP5A_468"/>
<dbReference type="MEROPS" id="S14.001"/>
<dbReference type="EnsemblBacteria" id="BAB13172">
    <property type="protein sequence ID" value="BAB13172"/>
    <property type="gene ID" value="BAB13172"/>
</dbReference>
<dbReference type="KEGG" id="buc:BU475"/>
<dbReference type="PATRIC" id="fig|107806.10.peg.484"/>
<dbReference type="eggNOG" id="COG0740">
    <property type="taxonomic scope" value="Bacteria"/>
</dbReference>
<dbReference type="HOGENOM" id="CLU_058707_3_2_6"/>
<dbReference type="Proteomes" id="UP000001806">
    <property type="component" value="Chromosome"/>
</dbReference>
<dbReference type="GO" id="GO:0005737">
    <property type="term" value="C:cytoplasm"/>
    <property type="evidence" value="ECO:0007669"/>
    <property type="project" value="UniProtKB-SubCell"/>
</dbReference>
<dbReference type="GO" id="GO:0009368">
    <property type="term" value="C:endopeptidase Clp complex"/>
    <property type="evidence" value="ECO:0007669"/>
    <property type="project" value="TreeGrafter"/>
</dbReference>
<dbReference type="GO" id="GO:0004176">
    <property type="term" value="F:ATP-dependent peptidase activity"/>
    <property type="evidence" value="ECO:0007669"/>
    <property type="project" value="InterPro"/>
</dbReference>
<dbReference type="GO" id="GO:0051117">
    <property type="term" value="F:ATPase binding"/>
    <property type="evidence" value="ECO:0007669"/>
    <property type="project" value="TreeGrafter"/>
</dbReference>
<dbReference type="GO" id="GO:0004252">
    <property type="term" value="F:serine-type endopeptidase activity"/>
    <property type="evidence" value="ECO:0007669"/>
    <property type="project" value="UniProtKB-UniRule"/>
</dbReference>
<dbReference type="GO" id="GO:0006515">
    <property type="term" value="P:protein quality control for misfolded or incompletely synthesized proteins"/>
    <property type="evidence" value="ECO:0007669"/>
    <property type="project" value="TreeGrafter"/>
</dbReference>
<dbReference type="CDD" id="cd07017">
    <property type="entry name" value="S14_ClpP_2"/>
    <property type="match status" value="1"/>
</dbReference>
<dbReference type="FunFam" id="3.90.226.10:FF:000001">
    <property type="entry name" value="ATP-dependent Clp protease proteolytic subunit"/>
    <property type="match status" value="1"/>
</dbReference>
<dbReference type="Gene3D" id="3.90.226.10">
    <property type="entry name" value="2-enoyl-CoA Hydratase, Chain A, domain 1"/>
    <property type="match status" value="1"/>
</dbReference>
<dbReference type="HAMAP" id="MF_00444">
    <property type="entry name" value="ClpP"/>
    <property type="match status" value="1"/>
</dbReference>
<dbReference type="InterPro" id="IPR001907">
    <property type="entry name" value="ClpP"/>
</dbReference>
<dbReference type="InterPro" id="IPR029045">
    <property type="entry name" value="ClpP/crotonase-like_dom_sf"/>
</dbReference>
<dbReference type="InterPro" id="IPR023562">
    <property type="entry name" value="ClpP/TepA"/>
</dbReference>
<dbReference type="InterPro" id="IPR033135">
    <property type="entry name" value="ClpP_His_AS"/>
</dbReference>
<dbReference type="InterPro" id="IPR018215">
    <property type="entry name" value="ClpP_Ser_AS"/>
</dbReference>
<dbReference type="NCBIfam" id="TIGR00493">
    <property type="entry name" value="clpP"/>
    <property type="match status" value="1"/>
</dbReference>
<dbReference type="NCBIfam" id="NF001368">
    <property type="entry name" value="PRK00277.1"/>
    <property type="match status" value="1"/>
</dbReference>
<dbReference type="NCBIfam" id="NF009205">
    <property type="entry name" value="PRK12553.1"/>
    <property type="match status" value="1"/>
</dbReference>
<dbReference type="PANTHER" id="PTHR10381">
    <property type="entry name" value="ATP-DEPENDENT CLP PROTEASE PROTEOLYTIC SUBUNIT"/>
    <property type="match status" value="1"/>
</dbReference>
<dbReference type="PANTHER" id="PTHR10381:SF70">
    <property type="entry name" value="ATP-DEPENDENT CLP PROTEASE PROTEOLYTIC SUBUNIT"/>
    <property type="match status" value="1"/>
</dbReference>
<dbReference type="Pfam" id="PF00574">
    <property type="entry name" value="CLP_protease"/>
    <property type="match status" value="1"/>
</dbReference>
<dbReference type="PRINTS" id="PR00127">
    <property type="entry name" value="CLPPROTEASEP"/>
</dbReference>
<dbReference type="SUPFAM" id="SSF52096">
    <property type="entry name" value="ClpP/crotonase"/>
    <property type="match status" value="1"/>
</dbReference>
<dbReference type="PROSITE" id="PS00382">
    <property type="entry name" value="CLP_PROTEASE_HIS"/>
    <property type="match status" value="1"/>
</dbReference>
<dbReference type="PROSITE" id="PS00381">
    <property type="entry name" value="CLP_PROTEASE_SER"/>
    <property type="match status" value="1"/>
</dbReference>
<organism>
    <name type="scientific">Buchnera aphidicola subsp. Acyrthosiphon pisum (strain APS)</name>
    <name type="common">Acyrthosiphon pisum symbiotic bacterium</name>
    <dbReference type="NCBI Taxonomy" id="107806"/>
    <lineage>
        <taxon>Bacteria</taxon>
        <taxon>Pseudomonadati</taxon>
        <taxon>Pseudomonadota</taxon>
        <taxon>Gammaproteobacteria</taxon>
        <taxon>Enterobacterales</taxon>
        <taxon>Erwiniaceae</taxon>
        <taxon>Buchnera</taxon>
    </lineage>
</organism>
<feature type="chain" id="PRO_0000179519" description="ATP-dependent Clp protease proteolytic subunit">
    <location>
        <begin position="1"/>
        <end position="208"/>
    </location>
</feature>
<feature type="active site" description="Nucleophile" evidence="1">
    <location>
        <position position="112"/>
    </location>
</feature>
<feature type="active site" evidence="1">
    <location>
        <position position="137"/>
    </location>
</feature>